<keyword id="KW-0010">Activator</keyword>
<keyword id="KW-0963">Cytoplasm</keyword>
<keyword id="KW-0238">DNA-binding</keyword>
<keyword id="KW-0276">Fatty acid metabolism</keyword>
<keyword id="KW-0443">Lipid metabolism</keyword>
<keyword id="KW-0678">Repressor</keyword>
<keyword id="KW-0804">Transcription</keyword>
<keyword id="KW-0805">Transcription regulation</keyword>
<gene>
    <name evidence="1" type="primary">fadR</name>
    <name type="ordered locus">ECSE_1235</name>
</gene>
<feature type="chain" id="PRO_1000132318" description="Fatty acid metabolism regulator protein">
    <location>
        <begin position="1"/>
        <end position="239"/>
    </location>
</feature>
<feature type="domain" description="HTH gntR-type" evidence="1">
    <location>
        <begin position="6"/>
        <end position="74"/>
    </location>
</feature>
<feature type="DNA-binding region" description="H-T-H motif" evidence="1">
    <location>
        <begin position="34"/>
        <end position="53"/>
    </location>
</feature>
<organism>
    <name type="scientific">Escherichia coli (strain SE11)</name>
    <dbReference type="NCBI Taxonomy" id="409438"/>
    <lineage>
        <taxon>Bacteria</taxon>
        <taxon>Pseudomonadati</taxon>
        <taxon>Pseudomonadota</taxon>
        <taxon>Gammaproteobacteria</taxon>
        <taxon>Enterobacterales</taxon>
        <taxon>Enterobacteriaceae</taxon>
        <taxon>Escherichia</taxon>
    </lineage>
</organism>
<proteinExistence type="inferred from homology"/>
<dbReference type="EMBL" id="AP009240">
    <property type="protein sequence ID" value="BAG76759.1"/>
    <property type="molecule type" value="Genomic_DNA"/>
</dbReference>
<dbReference type="RefSeq" id="WP_000234823.1">
    <property type="nucleotide sequence ID" value="NC_011415.1"/>
</dbReference>
<dbReference type="SMR" id="B6I9P8"/>
<dbReference type="GeneID" id="93776245"/>
<dbReference type="KEGG" id="ecy:ECSE_1235"/>
<dbReference type="HOGENOM" id="CLU_017584_9_4_6"/>
<dbReference type="Proteomes" id="UP000008199">
    <property type="component" value="Chromosome"/>
</dbReference>
<dbReference type="GO" id="GO:0005737">
    <property type="term" value="C:cytoplasm"/>
    <property type="evidence" value="ECO:0007669"/>
    <property type="project" value="UniProtKB-SubCell"/>
</dbReference>
<dbReference type="GO" id="GO:0003677">
    <property type="term" value="F:DNA binding"/>
    <property type="evidence" value="ECO:0007669"/>
    <property type="project" value="UniProtKB-KW"/>
</dbReference>
<dbReference type="GO" id="GO:0003700">
    <property type="term" value="F:DNA-binding transcription factor activity"/>
    <property type="evidence" value="ECO:0007669"/>
    <property type="project" value="UniProtKB-UniRule"/>
</dbReference>
<dbReference type="GO" id="GO:0000062">
    <property type="term" value="F:fatty-acyl-CoA binding"/>
    <property type="evidence" value="ECO:0007669"/>
    <property type="project" value="InterPro"/>
</dbReference>
<dbReference type="GO" id="GO:0006631">
    <property type="term" value="P:fatty acid metabolic process"/>
    <property type="evidence" value="ECO:0007669"/>
    <property type="project" value="UniProtKB-KW"/>
</dbReference>
<dbReference type="GO" id="GO:0019217">
    <property type="term" value="P:regulation of fatty acid metabolic process"/>
    <property type="evidence" value="ECO:0007669"/>
    <property type="project" value="UniProtKB-UniRule"/>
</dbReference>
<dbReference type="CDD" id="cd07377">
    <property type="entry name" value="WHTH_GntR"/>
    <property type="match status" value="1"/>
</dbReference>
<dbReference type="FunFam" id="1.10.10.10:FF:000036">
    <property type="entry name" value="Fatty acid metabolism regulator protein"/>
    <property type="match status" value="1"/>
</dbReference>
<dbReference type="FunFam" id="1.20.120.530:FF:000003">
    <property type="entry name" value="Fatty acid metabolism regulator protein"/>
    <property type="match status" value="1"/>
</dbReference>
<dbReference type="Gene3D" id="1.20.120.530">
    <property type="entry name" value="GntR ligand-binding domain-like"/>
    <property type="match status" value="1"/>
</dbReference>
<dbReference type="Gene3D" id="1.10.10.10">
    <property type="entry name" value="Winged helix-like DNA-binding domain superfamily/Winged helix DNA-binding domain"/>
    <property type="match status" value="1"/>
</dbReference>
<dbReference type="HAMAP" id="MF_00696">
    <property type="entry name" value="HTH_FadR"/>
    <property type="match status" value="1"/>
</dbReference>
<dbReference type="InterPro" id="IPR014178">
    <property type="entry name" value="FA-response_TF_FadR"/>
</dbReference>
<dbReference type="InterPro" id="IPR028374">
    <property type="entry name" value="FadR_C"/>
</dbReference>
<dbReference type="InterPro" id="IPR008920">
    <property type="entry name" value="TF_FadR/GntR_C"/>
</dbReference>
<dbReference type="InterPro" id="IPR000524">
    <property type="entry name" value="Tscrpt_reg_HTH_GntR"/>
</dbReference>
<dbReference type="InterPro" id="IPR036388">
    <property type="entry name" value="WH-like_DNA-bd_sf"/>
</dbReference>
<dbReference type="InterPro" id="IPR036390">
    <property type="entry name" value="WH_DNA-bd_sf"/>
</dbReference>
<dbReference type="NCBIfam" id="TIGR02812">
    <property type="entry name" value="fadR_gamma"/>
    <property type="match status" value="1"/>
</dbReference>
<dbReference type="NCBIfam" id="NF003444">
    <property type="entry name" value="PRK04984.1"/>
    <property type="match status" value="1"/>
</dbReference>
<dbReference type="PANTHER" id="PTHR43537:SF52">
    <property type="entry name" value="FATTY ACID METABOLISM REGULATOR PROTEIN"/>
    <property type="match status" value="1"/>
</dbReference>
<dbReference type="PANTHER" id="PTHR43537">
    <property type="entry name" value="TRANSCRIPTIONAL REGULATOR, GNTR FAMILY"/>
    <property type="match status" value="1"/>
</dbReference>
<dbReference type="Pfam" id="PF07840">
    <property type="entry name" value="FadR_C"/>
    <property type="match status" value="1"/>
</dbReference>
<dbReference type="Pfam" id="PF00392">
    <property type="entry name" value="GntR"/>
    <property type="match status" value="1"/>
</dbReference>
<dbReference type="PRINTS" id="PR00035">
    <property type="entry name" value="HTHGNTR"/>
</dbReference>
<dbReference type="SMART" id="SM00345">
    <property type="entry name" value="HTH_GNTR"/>
    <property type="match status" value="1"/>
</dbReference>
<dbReference type="SUPFAM" id="SSF48008">
    <property type="entry name" value="GntR ligand-binding domain-like"/>
    <property type="match status" value="1"/>
</dbReference>
<dbReference type="SUPFAM" id="SSF46785">
    <property type="entry name" value="Winged helix' DNA-binding domain"/>
    <property type="match status" value="1"/>
</dbReference>
<dbReference type="PROSITE" id="PS50949">
    <property type="entry name" value="HTH_GNTR"/>
    <property type="match status" value="1"/>
</dbReference>
<name>FADR_ECOSE</name>
<evidence type="ECO:0000255" key="1">
    <source>
        <dbReference type="HAMAP-Rule" id="MF_00696"/>
    </source>
</evidence>
<accession>B6I9P8</accession>
<reference key="1">
    <citation type="journal article" date="2008" name="DNA Res.">
        <title>Complete genome sequence and comparative analysis of the wild-type commensal Escherichia coli strain SE11 isolated from a healthy adult.</title>
        <authorList>
            <person name="Oshima K."/>
            <person name="Toh H."/>
            <person name="Ogura Y."/>
            <person name="Sasamoto H."/>
            <person name="Morita H."/>
            <person name="Park S.-H."/>
            <person name="Ooka T."/>
            <person name="Iyoda S."/>
            <person name="Taylor T.D."/>
            <person name="Hayashi T."/>
            <person name="Itoh K."/>
            <person name="Hattori M."/>
        </authorList>
    </citation>
    <scope>NUCLEOTIDE SEQUENCE [LARGE SCALE GENOMIC DNA]</scope>
    <source>
        <strain>SE11</strain>
    </source>
</reference>
<sequence length="239" mass="26969">MVIKAQSPAGFAEEYIIESIWNNRFPPGTILPAERELSELIGVTRTTLREVLQRLARDGWLTIQHGKPTKVNNFWETSGLNILETLARLDHESVPQLIDNLLSVRTNISTIFIRTAFRQHPDKAQEVLATANEVADHADAFAELDYNIFRGLAFASGNPIYGLILNGMKGLYTRIGRHYFANPEARSLALGFYHKLSALCSEGAHDQVYETVRRYGHESGEIWHRMQKNLPGDLAIQGR</sequence>
<protein>
    <recommendedName>
        <fullName evidence="1">Fatty acid metabolism regulator protein</fullName>
    </recommendedName>
</protein>
<comment type="function">
    <text evidence="1">Multifunctional regulator of fatty acid metabolism.</text>
</comment>
<comment type="subunit">
    <text evidence="1">Homodimer.</text>
</comment>
<comment type="subcellular location">
    <subcellularLocation>
        <location evidence="1">Cytoplasm</location>
    </subcellularLocation>
</comment>